<proteinExistence type="inferred from homology"/>
<dbReference type="EC" id="1.1.1.103" evidence="1"/>
<dbReference type="EMBL" id="CP001389">
    <property type="protein sequence ID" value="ACP26028.1"/>
    <property type="molecule type" value="Genomic_DNA"/>
</dbReference>
<dbReference type="RefSeq" id="WP_012708786.1">
    <property type="nucleotide sequence ID" value="NC_012587.1"/>
</dbReference>
<dbReference type="RefSeq" id="YP_002826781.1">
    <property type="nucleotide sequence ID" value="NC_012587.1"/>
</dbReference>
<dbReference type="SMR" id="C3MFH1"/>
<dbReference type="STRING" id="394.NGR_c22690"/>
<dbReference type="KEGG" id="rhi:NGR_c22690"/>
<dbReference type="PATRIC" id="fig|394.7.peg.5088"/>
<dbReference type="eggNOG" id="COG1063">
    <property type="taxonomic scope" value="Bacteria"/>
</dbReference>
<dbReference type="HOGENOM" id="CLU_026673_11_0_5"/>
<dbReference type="OrthoDB" id="9773078at2"/>
<dbReference type="UniPathway" id="UPA00046">
    <property type="reaction ID" value="UER00505"/>
</dbReference>
<dbReference type="Proteomes" id="UP000001054">
    <property type="component" value="Chromosome"/>
</dbReference>
<dbReference type="GO" id="GO:0005737">
    <property type="term" value="C:cytoplasm"/>
    <property type="evidence" value="ECO:0007669"/>
    <property type="project" value="UniProtKB-SubCell"/>
</dbReference>
<dbReference type="GO" id="GO:0008743">
    <property type="term" value="F:L-threonine 3-dehydrogenase activity"/>
    <property type="evidence" value="ECO:0007669"/>
    <property type="project" value="UniProtKB-UniRule"/>
</dbReference>
<dbReference type="GO" id="GO:0008270">
    <property type="term" value="F:zinc ion binding"/>
    <property type="evidence" value="ECO:0007669"/>
    <property type="project" value="UniProtKB-UniRule"/>
</dbReference>
<dbReference type="GO" id="GO:0019518">
    <property type="term" value="P:L-threonine catabolic process to glycine"/>
    <property type="evidence" value="ECO:0007669"/>
    <property type="project" value="UniProtKB-UniPathway"/>
</dbReference>
<dbReference type="Gene3D" id="3.90.180.10">
    <property type="entry name" value="Medium-chain alcohol dehydrogenases, catalytic domain"/>
    <property type="match status" value="1"/>
</dbReference>
<dbReference type="Gene3D" id="3.40.50.720">
    <property type="entry name" value="NAD(P)-binding Rossmann-like Domain"/>
    <property type="match status" value="1"/>
</dbReference>
<dbReference type="HAMAP" id="MF_00627">
    <property type="entry name" value="Thr_dehydrog"/>
    <property type="match status" value="1"/>
</dbReference>
<dbReference type="InterPro" id="IPR013149">
    <property type="entry name" value="ADH-like_C"/>
</dbReference>
<dbReference type="InterPro" id="IPR013154">
    <property type="entry name" value="ADH-like_N"/>
</dbReference>
<dbReference type="InterPro" id="IPR002328">
    <property type="entry name" value="ADH_Zn_CS"/>
</dbReference>
<dbReference type="InterPro" id="IPR011032">
    <property type="entry name" value="GroES-like_sf"/>
</dbReference>
<dbReference type="InterPro" id="IPR004627">
    <property type="entry name" value="L-Threonine_3-DHase"/>
</dbReference>
<dbReference type="InterPro" id="IPR036291">
    <property type="entry name" value="NAD(P)-bd_dom_sf"/>
</dbReference>
<dbReference type="InterPro" id="IPR020843">
    <property type="entry name" value="PKS_ER"/>
</dbReference>
<dbReference type="InterPro" id="IPR050129">
    <property type="entry name" value="Zn_alcohol_dh"/>
</dbReference>
<dbReference type="NCBIfam" id="NF003808">
    <property type="entry name" value="PRK05396.1"/>
    <property type="match status" value="1"/>
</dbReference>
<dbReference type="NCBIfam" id="TIGR00692">
    <property type="entry name" value="tdh"/>
    <property type="match status" value="1"/>
</dbReference>
<dbReference type="PANTHER" id="PTHR43401">
    <property type="entry name" value="L-THREONINE 3-DEHYDROGENASE"/>
    <property type="match status" value="1"/>
</dbReference>
<dbReference type="PANTHER" id="PTHR43401:SF2">
    <property type="entry name" value="L-THREONINE 3-DEHYDROGENASE"/>
    <property type="match status" value="1"/>
</dbReference>
<dbReference type="Pfam" id="PF08240">
    <property type="entry name" value="ADH_N"/>
    <property type="match status" value="1"/>
</dbReference>
<dbReference type="Pfam" id="PF00107">
    <property type="entry name" value="ADH_zinc_N"/>
    <property type="match status" value="1"/>
</dbReference>
<dbReference type="SMART" id="SM00829">
    <property type="entry name" value="PKS_ER"/>
    <property type="match status" value="1"/>
</dbReference>
<dbReference type="SUPFAM" id="SSF50129">
    <property type="entry name" value="GroES-like"/>
    <property type="match status" value="1"/>
</dbReference>
<dbReference type="SUPFAM" id="SSF51735">
    <property type="entry name" value="NAD(P)-binding Rossmann-fold domains"/>
    <property type="match status" value="1"/>
</dbReference>
<dbReference type="PROSITE" id="PS00059">
    <property type="entry name" value="ADH_ZINC"/>
    <property type="match status" value="1"/>
</dbReference>
<protein>
    <recommendedName>
        <fullName evidence="1">L-threonine 3-dehydrogenase</fullName>
        <shortName evidence="1">TDH</shortName>
        <ecNumber evidence="1">1.1.1.103</ecNumber>
    </recommendedName>
</protein>
<feature type="chain" id="PRO_1000147262" description="L-threonine 3-dehydrogenase">
    <location>
        <begin position="1"/>
        <end position="345"/>
    </location>
</feature>
<feature type="active site" description="Charge relay system" evidence="1">
    <location>
        <position position="44"/>
    </location>
</feature>
<feature type="active site" description="Charge relay system" evidence="1">
    <location>
        <position position="47"/>
    </location>
</feature>
<feature type="binding site" evidence="1">
    <location>
        <position position="42"/>
    </location>
    <ligand>
        <name>Zn(2+)</name>
        <dbReference type="ChEBI" id="CHEBI:29105"/>
        <label>1</label>
        <note>catalytic</note>
    </ligand>
</feature>
<feature type="binding site" evidence="1">
    <location>
        <position position="67"/>
    </location>
    <ligand>
        <name>Zn(2+)</name>
        <dbReference type="ChEBI" id="CHEBI:29105"/>
        <label>1</label>
        <note>catalytic</note>
    </ligand>
</feature>
<feature type="binding site" evidence="1">
    <location>
        <position position="68"/>
    </location>
    <ligand>
        <name>Zn(2+)</name>
        <dbReference type="ChEBI" id="CHEBI:29105"/>
        <label>1</label>
        <note>catalytic</note>
    </ligand>
</feature>
<feature type="binding site" evidence="1">
    <location>
        <position position="97"/>
    </location>
    <ligand>
        <name>Zn(2+)</name>
        <dbReference type="ChEBI" id="CHEBI:29105"/>
        <label>2</label>
    </ligand>
</feature>
<feature type="binding site" evidence="1">
    <location>
        <position position="100"/>
    </location>
    <ligand>
        <name>Zn(2+)</name>
        <dbReference type="ChEBI" id="CHEBI:29105"/>
        <label>2</label>
    </ligand>
</feature>
<feature type="binding site" evidence="1">
    <location>
        <position position="103"/>
    </location>
    <ligand>
        <name>Zn(2+)</name>
        <dbReference type="ChEBI" id="CHEBI:29105"/>
        <label>2</label>
    </ligand>
</feature>
<feature type="binding site" evidence="1">
    <location>
        <position position="111"/>
    </location>
    <ligand>
        <name>Zn(2+)</name>
        <dbReference type="ChEBI" id="CHEBI:29105"/>
        <label>2</label>
    </ligand>
</feature>
<feature type="binding site" evidence="1">
    <location>
        <position position="179"/>
    </location>
    <ligand>
        <name>NAD(+)</name>
        <dbReference type="ChEBI" id="CHEBI:57540"/>
    </ligand>
</feature>
<feature type="binding site" evidence="1">
    <location>
        <position position="199"/>
    </location>
    <ligand>
        <name>NAD(+)</name>
        <dbReference type="ChEBI" id="CHEBI:57540"/>
    </ligand>
</feature>
<feature type="binding site" evidence="1">
    <location>
        <position position="204"/>
    </location>
    <ligand>
        <name>NAD(+)</name>
        <dbReference type="ChEBI" id="CHEBI:57540"/>
    </ligand>
</feature>
<feature type="binding site" evidence="1">
    <location>
        <begin position="266"/>
        <end position="268"/>
    </location>
    <ligand>
        <name>NAD(+)</name>
        <dbReference type="ChEBI" id="CHEBI:57540"/>
    </ligand>
</feature>
<feature type="binding site" evidence="1">
    <location>
        <begin position="290"/>
        <end position="291"/>
    </location>
    <ligand>
        <name>NAD(+)</name>
        <dbReference type="ChEBI" id="CHEBI:57540"/>
    </ligand>
</feature>
<feature type="site" description="Important for catalytic activity for the proton relay mechanism but does not participate directly in the coordination of zinc atom" evidence="1">
    <location>
        <position position="152"/>
    </location>
</feature>
<accession>C3MFH1</accession>
<comment type="function">
    <text evidence="1">Catalyzes the NAD(+)-dependent oxidation of L-threonine to 2-amino-3-ketobutyrate.</text>
</comment>
<comment type="catalytic activity">
    <reaction evidence="1">
        <text>L-threonine + NAD(+) = (2S)-2-amino-3-oxobutanoate + NADH + H(+)</text>
        <dbReference type="Rhea" id="RHEA:13161"/>
        <dbReference type="ChEBI" id="CHEBI:15378"/>
        <dbReference type="ChEBI" id="CHEBI:57540"/>
        <dbReference type="ChEBI" id="CHEBI:57926"/>
        <dbReference type="ChEBI" id="CHEBI:57945"/>
        <dbReference type="ChEBI" id="CHEBI:78948"/>
        <dbReference type="EC" id="1.1.1.103"/>
    </reaction>
</comment>
<comment type="cofactor">
    <cofactor evidence="1">
        <name>Zn(2+)</name>
        <dbReference type="ChEBI" id="CHEBI:29105"/>
    </cofactor>
    <text evidence="1">Binds 2 Zn(2+) ions per subunit.</text>
</comment>
<comment type="pathway">
    <text evidence="1">Amino-acid degradation; L-threonine degradation via oxydo-reductase pathway; glycine from L-threonine: step 1/2.</text>
</comment>
<comment type="subunit">
    <text evidence="1">Homotetramer.</text>
</comment>
<comment type="subcellular location">
    <subcellularLocation>
        <location evidence="1">Cytoplasm</location>
    </subcellularLocation>
</comment>
<comment type="similarity">
    <text evidence="1">Belongs to the zinc-containing alcohol dehydrogenase family.</text>
</comment>
<name>TDH_SINFN</name>
<evidence type="ECO:0000255" key="1">
    <source>
        <dbReference type="HAMAP-Rule" id="MF_00627"/>
    </source>
</evidence>
<gene>
    <name evidence="1" type="primary">tdh</name>
    <name type="ordered locus">NGR_c22690</name>
</gene>
<sequence length="345" mass="37509">MTNMMKALVKTKPEVGLWMERVPVPEVGPNDVLIRVKKSAICGTDVHIWNWDQWAQKTIPVPMVVGHEFMGEIAEVGSAVTKHHVGERVSGEGHIVCGKCRNCRAGRGHLCRNTLGVGVNRPGSFAEFVCLPEYNVVTIPDDVPDEIAAIFDPFGNAVHTALSFDLVGEDVLVTGAGPIGIMGALVAKRSGARKVVITDINPVRLDLARKLGIDHVVDASKENLADVMRSIGMTEGFDVGLEMSGAAPAFRDMIDKMNNGGKIAILGIAPAGFEIDWNKVIFKMLNLKGIYGREMFETWYKMIAFVQGGLDLAPVITHRIGIDAFRDGFEAMRSGNSGKVVMDWI</sequence>
<organism>
    <name type="scientific">Sinorhizobium fredii (strain NBRC 101917 / NGR234)</name>
    <dbReference type="NCBI Taxonomy" id="394"/>
    <lineage>
        <taxon>Bacteria</taxon>
        <taxon>Pseudomonadati</taxon>
        <taxon>Pseudomonadota</taxon>
        <taxon>Alphaproteobacteria</taxon>
        <taxon>Hyphomicrobiales</taxon>
        <taxon>Rhizobiaceae</taxon>
        <taxon>Sinorhizobium/Ensifer group</taxon>
        <taxon>Sinorhizobium</taxon>
    </lineage>
</organism>
<keyword id="KW-0963">Cytoplasm</keyword>
<keyword id="KW-0479">Metal-binding</keyword>
<keyword id="KW-0520">NAD</keyword>
<keyword id="KW-0560">Oxidoreductase</keyword>
<keyword id="KW-1185">Reference proteome</keyword>
<keyword id="KW-0862">Zinc</keyword>
<reference key="1">
    <citation type="journal article" date="2009" name="Appl. Environ. Microbiol.">
        <title>Rhizobium sp. strain NGR234 possesses a remarkable number of secretion systems.</title>
        <authorList>
            <person name="Schmeisser C."/>
            <person name="Liesegang H."/>
            <person name="Krysciak D."/>
            <person name="Bakkou N."/>
            <person name="Le Quere A."/>
            <person name="Wollherr A."/>
            <person name="Heinemeyer I."/>
            <person name="Morgenstern B."/>
            <person name="Pommerening-Roeser A."/>
            <person name="Flores M."/>
            <person name="Palacios R."/>
            <person name="Brenner S."/>
            <person name="Gottschalk G."/>
            <person name="Schmitz R.A."/>
            <person name="Broughton W.J."/>
            <person name="Perret X."/>
            <person name="Strittmatter A.W."/>
            <person name="Streit W.R."/>
        </authorList>
    </citation>
    <scope>NUCLEOTIDE SEQUENCE [LARGE SCALE GENOMIC DNA]</scope>
    <source>
        <strain>NBRC 101917 / NGR234</strain>
    </source>
</reference>